<dbReference type="EMBL" id="AK291392">
    <property type="protein sequence ID" value="BAF84081.1"/>
    <property type="molecule type" value="mRNA"/>
</dbReference>
<dbReference type="EMBL" id="AK300704">
    <property type="protein sequence ID" value="BAG62383.1"/>
    <property type="molecule type" value="mRNA"/>
</dbReference>
<dbReference type="EMBL" id="AK312483">
    <property type="protein sequence ID" value="BAG35386.1"/>
    <property type="molecule type" value="mRNA"/>
</dbReference>
<dbReference type="EMBL" id="AC024938">
    <property type="status" value="NOT_ANNOTATED_CDS"/>
    <property type="molecule type" value="Genomic_DNA"/>
</dbReference>
<dbReference type="EMBL" id="AC069222">
    <property type="status" value="NOT_ANNOTATED_CDS"/>
    <property type="molecule type" value="Genomic_DNA"/>
</dbReference>
<dbReference type="EMBL" id="AC117419">
    <property type="status" value="NOT_ANNOTATED_CDS"/>
    <property type="molecule type" value="Genomic_DNA"/>
</dbReference>
<dbReference type="EMBL" id="AC129803">
    <property type="status" value="NOT_ANNOTATED_CDS"/>
    <property type="molecule type" value="Genomic_DNA"/>
</dbReference>
<dbReference type="EMBL" id="AC130887">
    <property type="status" value="NOT_ANNOTATED_CDS"/>
    <property type="molecule type" value="Genomic_DNA"/>
</dbReference>
<dbReference type="EMBL" id="BC006475">
    <property type="protein sequence ID" value="AAH06475.1"/>
    <property type="molecule type" value="mRNA"/>
</dbReference>
<dbReference type="EMBL" id="BC006512">
    <property type="protein sequence ID" value="AAH06512.1"/>
    <property type="molecule type" value="mRNA"/>
</dbReference>
<dbReference type="CCDS" id="CCDS2935.1">
    <molecule id="Q9BQ75-1"/>
</dbReference>
<dbReference type="CCDS" id="CCDS54618.1">
    <molecule id="Q9BQ75-2"/>
</dbReference>
<dbReference type="RefSeq" id="NP_001161396.1">
    <molecule id="Q9BQ75-2"/>
    <property type="nucleotide sequence ID" value="NM_001167924.2"/>
</dbReference>
<dbReference type="RefSeq" id="NP_115735.2">
    <molecule id="Q9BQ75-1"/>
    <property type="nucleotide sequence ID" value="NM_032359.4"/>
</dbReference>
<dbReference type="SMR" id="Q9BQ75"/>
<dbReference type="BioGRID" id="124045">
    <property type="interactions" value="170"/>
</dbReference>
<dbReference type="FunCoup" id="Q9BQ75">
    <property type="interactions" value="583"/>
</dbReference>
<dbReference type="IntAct" id="Q9BQ75">
    <property type="interactions" value="94"/>
</dbReference>
<dbReference type="MINT" id="Q9BQ75"/>
<dbReference type="STRING" id="9606.ENSP00000410396"/>
<dbReference type="GlyGen" id="Q9BQ75">
    <property type="glycosylation" value="1 site, 1 O-linked glycan (1 site)"/>
</dbReference>
<dbReference type="iPTMnet" id="Q9BQ75"/>
<dbReference type="PhosphoSitePlus" id="Q9BQ75"/>
<dbReference type="SwissPalm" id="Q9BQ75"/>
<dbReference type="BioMuta" id="CMSS1"/>
<dbReference type="DMDM" id="215274008"/>
<dbReference type="jPOST" id="Q9BQ75"/>
<dbReference type="MassIVE" id="Q9BQ75"/>
<dbReference type="PaxDb" id="9606-ENSP00000410396"/>
<dbReference type="PeptideAtlas" id="Q9BQ75"/>
<dbReference type="ProteomicsDB" id="20593"/>
<dbReference type="ProteomicsDB" id="78639">
    <molecule id="Q9BQ75-1"/>
</dbReference>
<dbReference type="Pumba" id="Q9BQ75"/>
<dbReference type="Antibodypedia" id="50471">
    <property type="antibodies" value="41 antibodies from 10 providers"/>
</dbReference>
<dbReference type="DNASU" id="84319"/>
<dbReference type="Ensembl" id="ENST00000421999.8">
    <molecule id="Q9BQ75-1"/>
    <property type="protein sequence ID" value="ENSP00000410396.2"/>
    <property type="gene ID" value="ENSG00000184220.12"/>
</dbReference>
<dbReference type="Ensembl" id="ENST00000489081.5">
    <molecule id="Q9BQ75-2"/>
    <property type="protein sequence ID" value="ENSP00000419161.1"/>
    <property type="gene ID" value="ENSG00000184220.12"/>
</dbReference>
<dbReference type="GeneID" id="84319"/>
<dbReference type="KEGG" id="hsa:84319"/>
<dbReference type="MANE-Select" id="ENST00000421999.8">
    <property type="protein sequence ID" value="ENSP00000410396.2"/>
    <property type="RefSeq nucleotide sequence ID" value="NM_032359.4"/>
    <property type="RefSeq protein sequence ID" value="NP_115735.2"/>
</dbReference>
<dbReference type="UCSC" id="uc003dtl.4">
    <molecule id="Q9BQ75-1"/>
    <property type="organism name" value="human"/>
</dbReference>
<dbReference type="AGR" id="HGNC:28666"/>
<dbReference type="CTD" id="84319"/>
<dbReference type="DisGeNET" id="84319"/>
<dbReference type="GeneCards" id="CMSS1"/>
<dbReference type="HGNC" id="HGNC:28666">
    <property type="gene designation" value="CMSS1"/>
</dbReference>
<dbReference type="HPA" id="ENSG00000184220">
    <property type="expression patterns" value="Low tissue specificity"/>
</dbReference>
<dbReference type="neXtProt" id="NX_Q9BQ75"/>
<dbReference type="OpenTargets" id="ENSG00000184220"/>
<dbReference type="PharmGKB" id="PA142672387"/>
<dbReference type="VEuPathDB" id="HostDB:ENSG00000184220"/>
<dbReference type="eggNOG" id="KOG3089">
    <property type="taxonomic scope" value="Eukaryota"/>
</dbReference>
<dbReference type="GeneTree" id="ENSGT00390000006574"/>
<dbReference type="InParanoid" id="Q9BQ75"/>
<dbReference type="OMA" id="DHFAQKA"/>
<dbReference type="OrthoDB" id="1929311at2759"/>
<dbReference type="PAN-GO" id="Q9BQ75">
    <property type="GO annotations" value="0 GO annotations based on evolutionary models"/>
</dbReference>
<dbReference type="PhylomeDB" id="Q9BQ75"/>
<dbReference type="TreeFam" id="TF329710"/>
<dbReference type="PathwayCommons" id="Q9BQ75"/>
<dbReference type="SignaLink" id="Q9BQ75"/>
<dbReference type="BioGRID-ORCS" id="84319">
    <property type="hits" value="16 hits in 1153 CRISPR screens"/>
</dbReference>
<dbReference type="CD-CODE" id="232F8A39">
    <property type="entry name" value="P-body"/>
</dbReference>
<dbReference type="CD-CODE" id="91857CE7">
    <property type="entry name" value="Nucleolus"/>
</dbReference>
<dbReference type="ChiTaRS" id="CMSS1">
    <property type="organism name" value="human"/>
</dbReference>
<dbReference type="GenomeRNAi" id="84319"/>
<dbReference type="Pharos" id="Q9BQ75">
    <property type="development level" value="Tdark"/>
</dbReference>
<dbReference type="PRO" id="PR:Q9BQ75"/>
<dbReference type="Proteomes" id="UP000005640">
    <property type="component" value="Chromosome 3"/>
</dbReference>
<dbReference type="RNAct" id="Q9BQ75">
    <property type="molecule type" value="protein"/>
</dbReference>
<dbReference type="Bgee" id="ENSG00000184220">
    <property type="expression patterns" value="Expressed in tibialis anterior and 182 other cell types or tissues"/>
</dbReference>
<dbReference type="ExpressionAtlas" id="Q9BQ75">
    <property type="expression patterns" value="baseline and differential"/>
</dbReference>
<dbReference type="GO" id="GO:0003723">
    <property type="term" value="F:RNA binding"/>
    <property type="evidence" value="ECO:0007005"/>
    <property type="project" value="UniProtKB"/>
</dbReference>
<dbReference type="Gene3D" id="3.40.50.300">
    <property type="entry name" value="P-loop containing nucleotide triphosphate hydrolases"/>
    <property type="match status" value="1"/>
</dbReference>
<dbReference type="InterPro" id="IPR032704">
    <property type="entry name" value="Cms1"/>
</dbReference>
<dbReference type="InterPro" id="IPR027417">
    <property type="entry name" value="P-loop_NTPase"/>
</dbReference>
<dbReference type="PANTHER" id="PTHR24030">
    <property type="entry name" value="PROTEIN CMSS1"/>
    <property type="match status" value="1"/>
</dbReference>
<dbReference type="PANTHER" id="PTHR24030:SF0">
    <property type="entry name" value="PROTEIN CMSS1"/>
    <property type="match status" value="1"/>
</dbReference>
<dbReference type="Pfam" id="PF14617">
    <property type="entry name" value="CMS1"/>
    <property type="match status" value="1"/>
</dbReference>
<dbReference type="SUPFAM" id="SSF52540">
    <property type="entry name" value="P-loop containing nucleoside triphosphate hydrolases"/>
    <property type="match status" value="1"/>
</dbReference>
<comment type="interaction">
    <interactant intactId="EBI-395649">
        <id>Q9BQ75</id>
    </interactant>
    <interactant intactId="EBI-720609">
        <id>O76024</id>
        <label>WFS1</label>
    </interactant>
    <organismsDiffer>false</organismsDiffer>
    <experiments>3</experiments>
</comment>
<comment type="alternative products">
    <event type="alternative splicing"/>
    <isoform>
        <id>Q9BQ75-1</id>
        <name>1</name>
        <sequence type="displayed"/>
    </isoform>
    <isoform>
        <id>Q9BQ75-2</id>
        <name>2</name>
        <sequence type="described" ref="VSP_046688"/>
    </isoform>
</comment>
<comment type="similarity">
    <text evidence="5">Belongs to the CMS1 family.</text>
</comment>
<proteinExistence type="evidence at protein level"/>
<keyword id="KW-0025">Alternative splicing</keyword>
<keyword id="KW-0488">Methylation</keyword>
<keyword id="KW-0597">Phosphoprotein</keyword>
<keyword id="KW-1267">Proteomics identification</keyword>
<keyword id="KW-1185">Reference proteome</keyword>
<organism>
    <name type="scientific">Homo sapiens</name>
    <name type="common">Human</name>
    <dbReference type="NCBI Taxonomy" id="9606"/>
    <lineage>
        <taxon>Eukaryota</taxon>
        <taxon>Metazoa</taxon>
        <taxon>Chordata</taxon>
        <taxon>Craniata</taxon>
        <taxon>Vertebrata</taxon>
        <taxon>Euteleostomi</taxon>
        <taxon>Mammalia</taxon>
        <taxon>Eutheria</taxon>
        <taxon>Euarchontoglires</taxon>
        <taxon>Primates</taxon>
        <taxon>Haplorrhini</taxon>
        <taxon>Catarrhini</taxon>
        <taxon>Hominidae</taxon>
        <taxon>Homo</taxon>
    </lineage>
</organism>
<gene>
    <name type="primary">CMSS1</name>
    <name type="synonym">C3orf26</name>
</gene>
<protein>
    <recommendedName>
        <fullName>Protein CMSS1</fullName>
    </recommendedName>
    <alternativeName>
        <fullName>Cms1 ribosomal small subunit homolog</fullName>
    </alternativeName>
</protein>
<name>CMS1_HUMAN</name>
<feature type="chain" id="PRO_0000239014" description="Protein CMSS1">
    <location>
        <begin position="1"/>
        <end position="279"/>
    </location>
</feature>
<feature type="region of interest" description="Disordered" evidence="2">
    <location>
        <begin position="1"/>
        <end position="89"/>
    </location>
</feature>
<feature type="compositionally biased region" description="Acidic residues" evidence="2">
    <location>
        <begin position="1"/>
        <end position="10"/>
    </location>
</feature>
<feature type="compositionally biased region" description="Polar residues" evidence="2">
    <location>
        <begin position="12"/>
        <end position="22"/>
    </location>
</feature>
<feature type="modified residue" description="Phosphoserine" evidence="1">
    <location>
        <position position="19"/>
    </location>
</feature>
<feature type="modified residue" description="Phosphoserine" evidence="1">
    <location>
        <position position="24"/>
    </location>
</feature>
<feature type="modified residue" description="Omega-N-methylarginine" evidence="7">
    <location>
        <position position="167"/>
    </location>
</feature>
<feature type="modified residue" description="Phosphothreonine" evidence="6">
    <location>
        <position position="212"/>
    </location>
</feature>
<feature type="splice variant" id="VSP_046688" description="In isoform 2." evidence="4">
    <original>MADDLGDEWWENQPTGAGSSP</original>
    <variation>MHG</variation>
    <location>
        <begin position="1"/>
        <end position="21"/>
    </location>
</feature>
<feature type="sequence variant" id="VAR_047645" description="In dbSNP:rs11537817." evidence="3">
    <original>E</original>
    <variation>G</variation>
    <location>
        <position position="138"/>
    </location>
</feature>
<feature type="sequence variant" id="VAR_033658" description="In dbSNP:rs11537816.">
    <original>V</original>
    <variation>I</variation>
    <location>
        <position position="166"/>
    </location>
</feature>
<feature type="sequence conflict" description="In Ref. 1; BAG62383." evidence="5" ref="1">
    <original>K</original>
    <variation>E</variation>
    <location>
        <position position="75"/>
    </location>
</feature>
<feature type="sequence conflict" description="In Ref. 1; BAG62383." evidence="5" ref="1">
    <original>DI</original>
    <variation>GV</variation>
    <location>
        <begin position="249"/>
        <end position="250"/>
    </location>
</feature>
<accession>Q9BQ75</accession>
<accession>A8K5S7</accession>
<accession>B4DUM1</accession>
<accession>E9PHS3</accession>
<sequence>MADDLGDEWWENQPTGAGSSPEASDGEGEGDTEVMQQETVPVPVPSEKTKQPKECFLIQPKERKENTTKTRKRRKKKITDVLAKSEPKPGLPEDLQKLMKDYYSSRRLVIELEELNLPDSCFLKANDLTHSLSSYLKEICPKWVKLRKNHSEKKSVLMLIICSSAVRALELIRSMTAFRGDGKVIKLFAKHIKVQAQVKLLEKRVVHLGVGTPGRIKELVKQGGLNLSPLKFLVFDWNWRDQKLRRMMDIPEIRKEVFELLEMGVLSLCKSESLKLGLF</sequence>
<reference key="1">
    <citation type="journal article" date="2004" name="Nat. Genet.">
        <title>Complete sequencing and characterization of 21,243 full-length human cDNAs.</title>
        <authorList>
            <person name="Ota T."/>
            <person name="Suzuki Y."/>
            <person name="Nishikawa T."/>
            <person name="Otsuki T."/>
            <person name="Sugiyama T."/>
            <person name="Irie R."/>
            <person name="Wakamatsu A."/>
            <person name="Hayashi K."/>
            <person name="Sato H."/>
            <person name="Nagai K."/>
            <person name="Kimura K."/>
            <person name="Makita H."/>
            <person name="Sekine M."/>
            <person name="Obayashi M."/>
            <person name="Nishi T."/>
            <person name="Shibahara T."/>
            <person name="Tanaka T."/>
            <person name="Ishii S."/>
            <person name="Yamamoto J."/>
            <person name="Saito K."/>
            <person name="Kawai Y."/>
            <person name="Isono Y."/>
            <person name="Nakamura Y."/>
            <person name="Nagahari K."/>
            <person name="Murakami K."/>
            <person name="Yasuda T."/>
            <person name="Iwayanagi T."/>
            <person name="Wagatsuma M."/>
            <person name="Shiratori A."/>
            <person name="Sudo H."/>
            <person name="Hosoiri T."/>
            <person name="Kaku Y."/>
            <person name="Kodaira H."/>
            <person name="Kondo H."/>
            <person name="Sugawara M."/>
            <person name="Takahashi M."/>
            <person name="Kanda K."/>
            <person name="Yokoi T."/>
            <person name="Furuya T."/>
            <person name="Kikkawa E."/>
            <person name="Omura Y."/>
            <person name="Abe K."/>
            <person name="Kamihara K."/>
            <person name="Katsuta N."/>
            <person name="Sato K."/>
            <person name="Tanikawa M."/>
            <person name="Yamazaki M."/>
            <person name="Ninomiya K."/>
            <person name="Ishibashi T."/>
            <person name="Yamashita H."/>
            <person name="Murakawa K."/>
            <person name="Fujimori K."/>
            <person name="Tanai H."/>
            <person name="Kimata M."/>
            <person name="Watanabe M."/>
            <person name="Hiraoka S."/>
            <person name="Chiba Y."/>
            <person name="Ishida S."/>
            <person name="Ono Y."/>
            <person name="Takiguchi S."/>
            <person name="Watanabe S."/>
            <person name="Yosida M."/>
            <person name="Hotuta T."/>
            <person name="Kusano J."/>
            <person name="Kanehori K."/>
            <person name="Takahashi-Fujii A."/>
            <person name="Hara H."/>
            <person name="Tanase T.-O."/>
            <person name="Nomura Y."/>
            <person name="Togiya S."/>
            <person name="Komai F."/>
            <person name="Hara R."/>
            <person name="Takeuchi K."/>
            <person name="Arita M."/>
            <person name="Imose N."/>
            <person name="Musashino K."/>
            <person name="Yuuki H."/>
            <person name="Oshima A."/>
            <person name="Sasaki N."/>
            <person name="Aotsuka S."/>
            <person name="Yoshikawa Y."/>
            <person name="Matsunawa H."/>
            <person name="Ichihara T."/>
            <person name="Shiohata N."/>
            <person name="Sano S."/>
            <person name="Moriya S."/>
            <person name="Momiyama H."/>
            <person name="Satoh N."/>
            <person name="Takami S."/>
            <person name="Terashima Y."/>
            <person name="Suzuki O."/>
            <person name="Nakagawa S."/>
            <person name="Senoh A."/>
            <person name="Mizoguchi H."/>
            <person name="Goto Y."/>
            <person name="Shimizu F."/>
            <person name="Wakebe H."/>
            <person name="Hishigaki H."/>
            <person name="Watanabe T."/>
            <person name="Sugiyama A."/>
            <person name="Takemoto M."/>
            <person name="Kawakami B."/>
            <person name="Yamazaki M."/>
            <person name="Watanabe K."/>
            <person name="Kumagai A."/>
            <person name="Itakura S."/>
            <person name="Fukuzumi Y."/>
            <person name="Fujimori Y."/>
            <person name="Komiyama M."/>
            <person name="Tashiro H."/>
            <person name="Tanigami A."/>
            <person name="Fujiwara T."/>
            <person name="Ono T."/>
            <person name="Yamada K."/>
            <person name="Fujii Y."/>
            <person name="Ozaki K."/>
            <person name="Hirao M."/>
            <person name="Ohmori Y."/>
            <person name="Kawabata A."/>
            <person name="Hikiji T."/>
            <person name="Kobatake N."/>
            <person name="Inagaki H."/>
            <person name="Ikema Y."/>
            <person name="Okamoto S."/>
            <person name="Okitani R."/>
            <person name="Kawakami T."/>
            <person name="Noguchi S."/>
            <person name="Itoh T."/>
            <person name="Shigeta K."/>
            <person name="Senba T."/>
            <person name="Matsumura K."/>
            <person name="Nakajima Y."/>
            <person name="Mizuno T."/>
            <person name="Morinaga M."/>
            <person name="Sasaki M."/>
            <person name="Togashi T."/>
            <person name="Oyama M."/>
            <person name="Hata H."/>
            <person name="Watanabe M."/>
            <person name="Komatsu T."/>
            <person name="Mizushima-Sugano J."/>
            <person name="Satoh T."/>
            <person name="Shirai Y."/>
            <person name="Takahashi Y."/>
            <person name="Nakagawa K."/>
            <person name="Okumura K."/>
            <person name="Nagase T."/>
            <person name="Nomura N."/>
            <person name="Kikuchi H."/>
            <person name="Masuho Y."/>
            <person name="Yamashita R."/>
            <person name="Nakai K."/>
            <person name="Yada T."/>
            <person name="Nakamura Y."/>
            <person name="Ohara O."/>
            <person name="Isogai T."/>
            <person name="Sugano S."/>
        </authorList>
    </citation>
    <scope>NUCLEOTIDE SEQUENCE [LARGE SCALE MRNA] (ISOFORMS 1 AND 2)</scope>
    <source>
        <tissue>Brain</tissue>
        <tissue>Hippocampus</tissue>
        <tissue>Skeletal muscle</tissue>
    </source>
</reference>
<reference key="2">
    <citation type="journal article" date="2006" name="Nature">
        <title>The DNA sequence, annotation and analysis of human chromosome 3.</title>
        <authorList>
            <person name="Muzny D.M."/>
            <person name="Scherer S.E."/>
            <person name="Kaul R."/>
            <person name="Wang J."/>
            <person name="Yu J."/>
            <person name="Sudbrak R."/>
            <person name="Buhay C.J."/>
            <person name="Chen R."/>
            <person name="Cree A."/>
            <person name="Ding Y."/>
            <person name="Dugan-Rocha S."/>
            <person name="Gill R."/>
            <person name="Gunaratne P."/>
            <person name="Harris R.A."/>
            <person name="Hawes A.C."/>
            <person name="Hernandez J."/>
            <person name="Hodgson A.V."/>
            <person name="Hume J."/>
            <person name="Jackson A."/>
            <person name="Khan Z.M."/>
            <person name="Kovar-Smith C."/>
            <person name="Lewis L.R."/>
            <person name="Lozado R.J."/>
            <person name="Metzker M.L."/>
            <person name="Milosavljevic A."/>
            <person name="Miner G.R."/>
            <person name="Morgan M.B."/>
            <person name="Nazareth L.V."/>
            <person name="Scott G."/>
            <person name="Sodergren E."/>
            <person name="Song X.-Z."/>
            <person name="Steffen D."/>
            <person name="Wei S."/>
            <person name="Wheeler D.A."/>
            <person name="Wright M.W."/>
            <person name="Worley K.C."/>
            <person name="Yuan Y."/>
            <person name="Zhang Z."/>
            <person name="Adams C.Q."/>
            <person name="Ansari-Lari M.A."/>
            <person name="Ayele M."/>
            <person name="Brown M.J."/>
            <person name="Chen G."/>
            <person name="Chen Z."/>
            <person name="Clendenning J."/>
            <person name="Clerc-Blankenburg K.P."/>
            <person name="Chen R."/>
            <person name="Chen Z."/>
            <person name="Davis C."/>
            <person name="Delgado O."/>
            <person name="Dinh H.H."/>
            <person name="Dong W."/>
            <person name="Draper H."/>
            <person name="Ernst S."/>
            <person name="Fu G."/>
            <person name="Gonzalez-Garay M.L."/>
            <person name="Garcia D.K."/>
            <person name="Gillett W."/>
            <person name="Gu J."/>
            <person name="Hao B."/>
            <person name="Haugen E."/>
            <person name="Havlak P."/>
            <person name="He X."/>
            <person name="Hennig S."/>
            <person name="Hu S."/>
            <person name="Huang W."/>
            <person name="Jackson L.R."/>
            <person name="Jacob L.S."/>
            <person name="Kelly S.H."/>
            <person name="Kube M."/>
            <person name="Levy R."/>
            <person name="Li Z."/>
            <person name="Liu B."/>
            <person name="Liu J."/>
            <person name="Liu W."/>
            <person name="Lu J."/>
            <person name="Maheshwari M."/>
            <person name="Nguyen B.-V."/>
            <person name="Okwuonu G.O."/>
            <person name="Palmeiri A."/>
            <person name="Pasternak S."/>
            <person name="Perez L.M."/>
            <person name="Phelps K.A."/>
            <person name="Plopper F.J."/>
            <person name="Qiang B."/>
            <person name="Raymond C."/>
            <person name="Rodriguez R."/>
            <person name="Saenphimmachak C."/>
            <person name="Santibanez J."/>
            <person name="Shen H."/>
            <person name="Shen Y."/>
            <person name="Subramanian S."/>
            <person name="Tabor P.E."/>
            <person name="Verduzco D."/>
            <person name="Waldron L."/>
            <person name="Wang J."/>
            <person name="Wang J."/>
            <person name="Wang Q."/>
            <person name="Williams G.A."/>
            <person name="Wong G.K.-S."/>
            <person name="Yao Z."/>
            <person name="Zhang J."/>
            <person name="Zhang X."/>
            <person name="Zhao G."/>
            <person name="Zhou J."/>
            <person name="Zhou Y."/>
            <person name="Nelson D."/>
            <person name="Lehrach H."/>
            <person name="Reinhardt R."/>
            <person name="Naylor S.L."/>
            <person name="Yang H."/>
            <person name="Olson M."/>
            <person name="Weinstock G."/>
            <person name="Gibbs R.A."/>
        </authorList>
    </citation>
    <scope>NUCLEOTIDE SEQUENCE [LARGE SCALE GENOMIC DNA]</scope>
</reference>
<reference key="3">
    <citation type="journal article" date="2004" name="Genome Res.">
        <title>The status, quality, and expansion of the NIH full-length cDNA project: the Mammalian Gene Collection (MGC).</title>
        <authorList>
            <consortium name="The MGC Project Team"/>
        </authorList>
    </citation>
    <scope>NUCLEOTIDE SEQUENCE [LARGE SCALE MRNA] (ISOFORM 1)</scope>
    <scope>VARIANT GLY-138</scope>
    <source>
        <tissue>Lung</tissue>
    </source>
</reference>
<reference key="4">
    <citation type="journal article" date="2010" name="Sci. Signal.">
        <title>Quantitative phosphoproteomics reveals widespread full phosphorylation site occupancy during mitosis.</title>
        <authorList>
            <person name="Olsen J.V."/>
            <person name="Vermeulen M."/>
            <person name="Santamaria A."/>
            <person name="Kumar C."/>
            <person name="Miller M.L."/>
            <person name="Jensen L.J."/>
            <person name="Gnad F."/>
            <person name="Cox J."/>
            <person name="Jensen T.S."/>
            <person name="Nigg E.A."/>
            <person name="Brunak S."/>
            <person name="Mann M."/>
        </authorList>
    </citation>
    <scope>PHOSPHORYLATION [LARGE SCALE ANALYSIS] AT THR-212</scope>
    <scope>IDENTIFICATION BY MASS SPECTROMETRY [LARGE SCALE ANALYSIS]</scope>
    <source>
        <tissue>Cervix carcinoma</tissue>
    </source>
</reference>
<reference key="5">
    <citation type="journal article" date="2011" name="BMC Syst. Biol.">
        <title>Initial characterization of the human central proteome.</title>
        <authorList>
            <person name="Burkard T.R."/>
            <person name="Planyavsky M."/>
            <person name="Kaupe I."/>
            <person name="Breitwieser F.P."/>
            <person name="Buerckstuemmer T."/>
            <person name="Bennett K.L."/>
            <person name="Superti-Furga G."/>
            <person name="Colinge J."/>
        </authorList>
    </citation>
    <scope>IDENTIFICATION BY MASS SPECTROMETRY [LARGE SCALE ANALYSIS]</scope>
</reference>
<reference key="6">
    <citation type="journal article" date="2014" name="Mol. Cell. Proteomics">
        <title>Immunoaffinity enrichment and mass spectrometry analysis of protein methylation.</title>
        <authorList>
            <person name="Guo A."/>
            <person name="Gu H."/>
            <person name="Zhou J."/>
            <person name="Mulhern D."/>
            <person name="Wang Y."/>
            <person name="Lee K.A."/>
            <person name="Yang V."/>
            <person name="Aguiar M."/>
            <person name="Kornhauser J."/>
            <person name="Jia X."/>
            <person name="Ren J."/>
            <person name="Beausoleil S.A."/>
            <person name="Silva J.C."/>
            <person name="Vemulapalli V."/>
            <person name="Bedford M.T."/>
            <person name="Comb M.J."/>
        </authorList>
    </citation>
    <scope>METHYLATION [LARGE SCALE ANALYSIS] AT ARG-167</scope>
    <scope>IDENTIFICATION BY MASS SPECTROMETRY [LARGE SCALE ANALYSIS]</scope>
    <source>
        <tissue>Colon carcinoma</tissue>
    </source>
</reference>
<evidence type="ECO:0000250" key="1">
    <source>
        <dbReference type="UniProtKB" id="Q5FVR6"/>
    </source>
</evidence>
<evidence type="ECO:0000256" key="2">
    <source>
        <dbReference type="SAM" id="MobiDB-lite"/>
    </source>
</evidence>
<evidence type="ECO:0000269" key="3">
    <source>
    </source>
</evidence>
<evidence type="ECO:0000303" key="4">
    <source>
    </source>
</evidence>
<evidence type="ECO:0000305" key="5"/>
<evidence type="ECO:0007744" key="6">
    <source>
    </source>
</evidence>
<evidence type="ECO:0007744" key="7">
    <source>
    </source>
</evidence>